<name>HUTH_CERSK</name>
<protein>
    <recommendedName>
        <fullName evidence="1">Histidine ammonia-lyase</fullName>
        <shortName evidence="1">Histidase</shortName>
        <ecNumber evidence="1">4.3.1.3</ecNumber>
    </recommendedName>
</protein>
<reference key="1">
    <citation type="journal article" date="2009" name="J. Bacteriol.">
        <title>Complete genome sequence of Rhodobacter sphaeroides KD131.</title>
        <authorList>
            <person name="Lim S.-K."/>
            <person name="Kim S.J."/>
            <person name="Cha S.H."/>
            <person name="Oh Y.-K."/>
            <person name="Rhee H.-J."/>
            <person name="Kim M.-S."/>
            <person name="Lee J.K."/>
        </authorList>
    </citation>
    <scope>NUCLEOTIDE SEQUENCE [LARGE SCALE GENOMIC DNA]</scope>
    <source>
        <strain>KD131 / KCTC 12085</strain>
    </source>
</reference>
<keyword id="KW-0963">Cytoplasm</keyword>
<keyword id="KW-0369">Histidine metabolism</keyword>
<keyword id="KW-0456">Lyase</keyword>
<feature type="chain" id="PRO_1000125096" description="Histidine ammonia-lyase">
    <location>
        <begin position="1"/>
        <end position="507"/>
    </location>
</feature>
<feature type="modified residue" description="2,3-didehydroalanine (Ser)" evidence="1">
    <location>
        <position position="142"/>
    </location>
</feature>
<feature type="cross-link" description="5-imidazolinone (Ala-Gly)" evidence="1">
    <location>
        <begin position="141"/>
        <end position="143"/>
    </location>
</feature>
<accession>B9KSW6</accession>
<organism>
    <name type="scientific">Cereibacter sphaeroides (strain KD131 / KCTC 12085)</name>
    <name type="common">Rhodobacter sphaeroides</name>
    <dbReference type="NCBI Taxonomy" id="557760"/>
    <lineage>
        <taxon>Bacteria</taxon>
        <taxon>Pseudomonadati</taxon>
        <taxon>Pseudomonadota</taxon>
        <taxon>Alphaproteobacteria</taxon>
        <taxon>Rhodobacterales</taxon>
        <taxon>Paracoccaceae</taxon>
        <taxon>Cereibacter</taxon>
    </lineage>
</organism>
<proteinExistence type="inferred from homology"/>
<comment type="catalytic activity">
    <reaction evidence="1">
        <text>L-histidine = trans-urocanate + NH4(+)</text>
        <dbReference type="Rhea" id="RHEA:21232"/>
        <dbReference type="ChEBI" id="CHEBI:17771"/>
        <dbReference type="ChEBI" id="CHEBI:28938"/>
        <dbReference type="ChEBI" id="CHEBI:57595"/>
        <dbReference type="EC" id="4.3.1.3"/>
    </reaction>
</comment>
<comment type="pathway">
    <text evidence="1">Amino-acid degradation; L-histidine degradation into L-glutamate; N-formimidoyl-L-glutamate from L-histidine: step 1/3.</text>
</comment>
<comment type="subcellular location">
    <subcellularLocation>
        <location evidence="1">Cytoplasm</location>
    </subcellularLocation>
</comment>
<comment type="PTM">
    <text evidence="1">Contains an active site 4-methylidene-imidazol-5-one (MIO), which is formed autocatalytically by cyclization and dehydration of residues Ala-Ser-Gly.</text>
</comment>
<comment type="similarity">
    <text evidence="1">Belongs to the PAL/histidase family.</text>
</comment>
<sequence length="507" mass="51792">MEILVPGQATLAQLEAIWREGRRARLAPEARPAVEAAAARVAAAAAGTAPVYGVNTGFGKLASLKIAPADTAQLQRNLILSHCCGVGEPMPPSTARLMMALKLLSLGRGASGVRWKIVALLEGMLAAGVTPVIPAQGSVGASGDLAPLAHMAAVMIGEGEAEVGGRRLPGAAALAHAGLAPVALGPKEGLALINGTQFSTAYALAGLFEGWRAAQAALVISALSTDAIMGSTAPLRPEIHALRGHAGQIEAAATMRALLEGSAIRESHREGDQRVQDPYCIRCQPQVTGAAMDVLRMAAGTLATEANAATDNPLVLSDGRIVSGGNFHAEPVGFAADMIALALSEIGAIAQRRVALMVDPTLSFDLPPFLTPEPGLNSGLMIAEVTTAALMSENKHMAAPTVTDSTPTSANQEDHVSMAAHGARRLGRMVENLAVILGTEAICAAQGVEFRAPLATSAPLGAVLARLRAEVPRLGADRILAPDLAAAARLVRTGALARAAGLPLPAL</sequence>
<gene>
    <name evidence="1" type="primary">hutH</name>
    <name type="ordered locus">RSKD131_1252</name>
</gene>
<dbReference type="EC" id="4.3.1.3" evidence="1"/>
<dbReference type="EMBL" id="CP001150">
    <property type="protein sequence ID" value="ACM01112.1"/>
    <property type="molecule type" value="Genomic_DNA"/>
</dbReference>
<dbReference type="RefSeq" id="WP_015920620.1">
    <property type="nucleotide sequence ID" value="NC_011963.1"/>
</dbReference>
<dbReference type="SMR" id="B9KSW6"/>
<dbReference type="GeneID" id="67446675"/>
<dbReference type="KEGG" id="rsk:RSKD131_1252"/>
<dbReference type="HOGENOM" id="CLU_014801_4_0_5"/>
<dbReference type="UniPathway" id="UPA00379">
    <property type="reaction ID" value="UER00549"/>
</dbReference>
<dbReference type="GO" id="GO:0005737">
    <property type="term" value="C:cytoplasm"/>
    <property type="evidence" value="ECO:0007669"/>
    <property type="project" value="UniProtKB-SubCell"/>
</dbReference>
<dbReference type="GO" id="GO:0004397">
    <property type="term" value="F:histidine ammonia-lyase activity"/>
    <property type="evidence" value="ECO:0007669"/>
    <property type="project" value="UniProtKB-UniRule"/>
</dbReference>
<dbReference type="GO" id="GO:0019556">
    <property type="term" value="P:L-histidine catabolic process to glutamate and formamide"/>
    <property type="evidence" value="ECO:0007669"/>
    <property type="project" value="UniProtKB-UniPathway"/>
</dbReference>
<dbReference type="GO" id="GO:0019557">
    <property type="term" value="P:L-histidine catabolic process to glutamate and formate"/>
    <property type="evidence" value="ECO:0007669"/>
    <property type="project" value="UniProtKB-UniPathway"/>
</dbReference>
<dbReference type="CDD" id="cd00332">
    <property type="entry name" value="PAL-HAL"/>
    <property type="match status" value="1"/>
</dbReference>
<dbReference type="FunFam" id="1.10.275.10:FF:000005">
    <property type="entry name" value="Histidine ammonia-lyase"/>
    <property type="match status" value="1"/>
</dbReference>
<dbReference type="FunFam" id="1.20.200.10:FF:000003">
    <property type="entry name" value="Histidine ammonia-lyase"/>
    <property type="match status" value="1"/>
</dbReference>
<dbReference type="Gene3D" id="1.20.200.10">
    <property type="entry name" value="Fumarase/aspartase (Central domain)"/>
    <property type="match status" value="1"/>
</dbReference>
<dbReference type="Gene3D" id="1.10.275.10">
    <property type="entry name" value="Fumarase/aspartase (N-terminal domain)"/>
    <property type="match status" value="1"/>
</dbReference>
<dbReference type="HAMAP" id="MF_00229">
    <property type="entry name" value="His_ammonia_lyase"/>
    <property type="match status" value="1"/>
</dbReference>
<dbReference type="InterPro" id="IPR001106">
    <property type="entry name" value="Aromatic_Lyase"/>
</dbReference>
<dbReference type="InterPro" id="IPR024083">
    <property type="entry name" value="Fumarase/histidase_N"/>
</dbReference>
<dbReference type="InterPro" id="IPR005921">
    <property type="entry name" value="HutH"/>
</dbReference>
<dbReference type="InterPro" id="IPR008948">
    <property type="entry name" value="L-Aspartase-like"/>
</dbReference>
<dbReference type="InterPro" id="IPR022313">
    <property type="entry name" value="Phe/His_NH3-lyase_AS"/>
</dbReference>
<dbReference type="NCBIfam" id="TIGR01225">
    <property type="entry name" value="hutH"/>
    <property type="match status" value="1"/>
</dbReference>
<dbReference type="NCBIfam" id="NF006871">
    <property type="entry name" value="PRK09367.1"/>
    <property type="match status" value="1"/>
</dbReference>
<dbReference type="PANTHER" id="PTHR10362">
    <property type="entry name" value="HISTIDINE AMMONIA-LYASE"/>
    <property type="match status" value="1"/>
</dbReference>
<dbReference type="Pfam" id="PF00221">
    <property type="entry name" value="Lyase_aromatic"/>
    <property type="match status" value="1"/>
</dbReference>
<dbReference type="SUPFAM" id="SSF48557">
    <property type="entry name" value="L-aspartase-like"/>
    <property type="match status" value="1"/>
</dbReference>
<dbReference type="PROSITE" id="PS00488">
    <property type="entry name" value="PAL_HISTIDASE"/>
    <property type="match status" value="1"/>
</dbReference>
<evidence type="ECO:0000255" key="1">
    <source>
        <dbReference type="HAMAP-Rule" id="MF_00229"/>
    </source>
</evidence>